<reference key="1">
    <citation type="submission" date="2008-12" db="EMBL/GenBank/DDBJ databases">
        <title>Complete sequence of chromosome of Methylobacterium chloromethanicum CM4.</title>
        <authorList>
            <consortium name="US DOE Joint Genome Institute"/>
            <person name="Lucas S."/>
            <person name="Copeland A."/>
            <person name="Lapidus A."/>
            <person name="Glavina del Rio T."/>
            <person name="Dalin E."/>
            <person name="Tice H."/>
            <person name="Bruce D."/>
            <person name="Goodwin L."/>
            <person name="Pitluck S."/>
            <person name="Chertkov O."/>
            <person name="Brettin T."/>
            <person name="Detter J.C."/>
            <person name="Han C."/>
            <person name="Larimer F."/>
            <person name="Land M."/>
            <person name="Hauser L."/>
            <person name="Kyrpides N."/>
            <person name="Mikhailova N."/>
            <person name="Marx C."/>
            <person name="Richardson P."/>
        </authorList>
    </citation>
    <scope>NUCLEOTIDE SEQUENCE [LARGE SCALE GENOMIC DNA]</scope>
    <source>
        <strain>CM4 / NCIMB 13688</strain>
    </source>
</reference>
<comment type="function">
    <text evidence="1">Promotes RNA polymerase assembly. Latches the N- and C-terminal regions of the beta' subunit thereby facilitating its interaction with the beta and alpha subunits.</text>
</comment>
<comment type="catalytic activity">
    <reaction evidence="1">
        <text>RNA(n) + a ribonucleoside 5'-triphosphate = RNA(n+1) + diphosphate</text>
        <dbReference type="Rhea" id="RHEA:21248"/>
        <dbReference type="Rhea" id="RHEA-COMP:14527"/>
        <dbReference type="Rhea" id="RHEA-COMP:17342"/>
        <dbReference type="ChEBI" id="CHEBI:33019"/>
        <dbReference type="ChEBI" id="CHEBI:61557"/>
        <dbReference type="ChEBI" id="CHEBI:140395"/>
        <dbReference type="EC" id="2.7.7.6"/>
    </reaction>
</comment>
<comment type="subunit">
    <text evidence="1">The RNAP catalytic core consists of 2 alpha, 1 beta, 1 beta' and 1 omega subunit. When a sigma factor is associated with the core the holoenzyme is formed, which can initiate transcription.</text>
</comment>
<comment type="similarity">
    <text evidence="1">Belongs to the RNA polymerase subunit omega family.</text>
</comment>
<protein>
    <recommendedName>
        <fullName evidence="1">DNA-directed RNA polymerase subunit omega</fullName>
        <shortName evidence="1">RNAP omega subunit</shortName>
        <ecNumber evidence="1">2.7.7.6</ecNumber>
    </recommendedName>
    <alternativeName>
        <fullName evidence="1">RNA polymerase omega subunit</fullName>
    </alternativeName>
    <alternativeName>
        <fullName evidence="1">Transcriptase subunit omega</fullName>
    </alternativeName>
</protein>
<name>RPOZ_METC4</name>
<proteinExistence type="inferred from homology"/>
<sequence length="136" mass="14990">MARVTVEDCIEKVENRFELVLLASHRARLLAAGAPLTVERDRDKNPVVALREIGDETITAEDLKEQLIHSMQKYVEVDEPEAETVPLLSSSPAAAAVAPQSSSDDKNVQFDFMSEEDLLRGLENLAPPTETDDEGE</sequence>
<feature type="chain" id="PRO_1000194800" description="DNA-directed RNA polymerase subunit omega">
    <location>
        <begin position="1"/>
        <end position="136"/>
    </location>
</feature>
<organism>
    <name type="scientific">Methylorubrum extorquens (strain CM4 / NCIMB 13688)</name>
    <name type="common">Methylobacterium extorquens</name>
    <dbReference type="NCBI Taxonomy" id="440085"/>
    <lineage>
        <taxon>Bacteria</taxon>
        <taxon>Pseudomonadati</taxon>
        <taxon>Pseudomonadota</taxon>
        <taxon>Alphaproteobacteria</taxon>
        <taxon>Hyphomicrobiales</taxon>
        <taxon>Methylobacteriaceae</taxon>
        <taxon>Methylorubrum</taxon>
    </lineage>
</organism>
<accession>B7KVD3</accession>
<evidence type="ECO:0000255" key="1">
    <source>
        <dbReference type="HAMAP-Rule" id="MF_00366"/>
    </source>
</evidence>
<gene>
    <name evidence="1" type="primary">rpoZ</name>
    <name type="ordered locus">Mchl_3521</name>
</gene>
<dbReference type="EC" id="2.7.7.6" evidence="1"/>
<dbReference type="EMBL" id="CP001298">
    <property type="protein sequence ID" value="ACK84341.1"/>
    <property type="molecule type" value="Genomic_DNA"/>
</dbReference>
<dbReference type="RefSeq" id="WP_003602879.1">
    <property type="nucleotide sequence ID" value="NC_011757.1"/>
</dbReference>
<dbReference type="SMR" id="B7KVD3"/>
<dbReference type="GeneID" id="72990842"/>
<dbReference type="KEGG" id="mch:Mchl_3521"/>
<dbReference type="HOGENOM" id="CLU_125406_2_0_5"/>
<dbReference type="Proteomes" id="UP000002385">
    <property type="component" value="Chromosome"/>
</dbReference>
<dbReference type="GO" id="GO:0000428">
    <property type="term" value="C:DNA-directed RNA polymerase complex"/>
    <property type="evidence" value="ECO:0007669"/>
    <property type="project" value="UniProtKB-KW"/>
</dbReference>
<dbReference type="GO" id="GO:0003677">
    <property type="term" value="F:DNA binding"/>
    <property type="evidence" value="ECO:0007669"/>
    <property type="project" value="UniProtKB-UniRule"/>
</dbReference>
<dbReference type="GO" id="GO:0003899">
    <property type="term" value="F:DNA-directed RNA polymerase activity"/>
    <property type="evidence" value="ECO:0007669"/>
    <property type="project" value="UniProtKB-UniRule"/>
</dbReference>
<dbReference type="GO" id="GO:0006351">
    <property type="term" value="P:DNA-templated transcription"/>
    <property type="evidence" value="ECO:0007669"/>
    <property type="project" value="UniProtKB-UniRule"/>
</dbReference>
<dbReference type="Gene3D" id="3.90.940.10">
    <property type="match status" value="1"/>
</dbReference>
<dbReference type="HAMAP" id="MF_00366">
    <property type="entry name" value="RNApol_bact_RpoZ"/>
    <property type="match status" value="1"/>
</dbReference>
<dbReference type="InterPro" id="IPR003716">
    <property type="entry name" value="DNA-dir_RNA_pol_omega"/>
</dbReference>
<dbReference type="InterPro" id="IPR006110">
    <property type="entry name" value="Pol_omega/Rpo6/RPB6"/>
</dbReference>
<dbReference type="InterPro" id="IPR036161">
    <property type="entry name" value="RPB6/omega-like_sf"/>
</dbReference>
<dbReference type="NCBIfam" id="TIGR00690">
    <property type="entry name" value="rpoZ"/>
    <property type="match status" value="1"/>
</dbReference>
<dbReference type="PANTHER" id="PTHR34476">
    <property type="entry name" value="DNA-DIRECTED RNA POLYMERASE SUBUNIT OMEGA"/>
    <property type="match status" value="1"/>
</dbReference>
<dbReference type="PANTHER" id="PTHR34476:SF1">
    <property type="entry name" value="DNA-DIRECTED RNA POLYMERASE SUBUNIT OMEGA"/>
    <property type="match status" value="1"/>
</dbReference>
<dbReference type="Pfam" id="PF01192">
    <property type="entry name" value="RNA_pol_Rpb6"/>
    <property type="match status" value="1"/>
</dbReference>
<dbReference type="SMART" id="SM01409">
    <property type="entry name" value="RNA_pol_Rpb6"/>
    <property type="match status" value="1"/>
</dbReference>
<dbReference type="SUPFAM" id="SSF63562">
    <property type="entry name" value="RPB6/omega subunit-like"/>
    <property type="match status" value="1"/>
</dbReference>
<keyword id="KW-0240">DNA-directed RNA polymerase</keyword>
<keyword id="KW-0548">Nucleotidyltransferase</keyword>
<keyword id="KW-0804">Transcription</keyword>
<keyword id="KW-0808">Transferase</keyword>